<dbReference type="EC" id="1.14.99.1" evidence="3"/>
<dbReference type="EMBL" id="AF026008">
    <property type="protein sequence ID" value="AAD01796.1"/>
    <property type="molecule type" value="mRNA"/>
</dbReference>
<dbReference type="RefSeq" id="NP_001076150.1">
    <property type="nucleotide sequence ID" value="NM_001082681.1"/>
</dbReference>
<dbReference type="SMR" id="O97554"/>
<dbReference type="FunCoup" id="O97554">
    <property type="interactions" value="43"/>
</dbReference>
<dbReference type="STRING" id="9986.ENSOCUP00000031756"/>
<dbReference type="BindingDB" id="O97554"/>
<dbReference type="ChEMBL" id="CHEMBL3334"/>
<dbReference type="DrugCentral" id="O97554"/>
<dbReference type="PeroxiBase" id="4131">
    <property type="entry name" value="OcuPGHS01"/>
</dbReference>
<dbReference type="GlyCosmos" id="O97554">
    <property type="glycosylation" value="4 sites, No reported glycans"/>
</dbReference>
<dbReference type="PaxDb" id="9986-ENSOCUP00000002186"/>
<dbReference type="GeneID" id="100009407"/>
<dbReference type="KEGG" id="ocu:100009407"/>
<dbReference type="CTD" id="5742"/>
<dbReference type="eggNOG" id="KOG2408">
    <property type="taxonomic scope" value="Eukaryota"/>
</dbReference>
<dbReference type="InParanoid" id="O97554"/>
<dbReference type="OrthoDB" id="823504at2759"/>
<dbReference type="UniPathway" id="UPA00662"/>
<dbReference type="PRO" id="PR:O97554"/>
<dbReference type="Proteomes" id="UP000001811">
    <property type="component" value="Unplaced"/>
</dbReference>
<dbReference type="GO" id="GO:0005789">
    <property type="term" value="C:endoplasmic reticulum membrane"/>
    <property type="evidence" value="ECO:0007669"/>
    <property type="project" value="UniProtKB-SubCell"/>
</dbReference>
<dbReference type="GO" id="GO:0043005">
    <property type="term" value="C:neuron projection"/>
    <property type="evidence" value="ECO:0007669"/>
    <property type="project" value="TreeGrafter"/>
</dbReference>
<dbReference type="GO" id="GO:0020037">
    <property type="term" value="F:heme binding"/>
    <property type="evidence" value="ECO:0007669"/>
    <property type="project" value="InterPro"/>
</dbReference>
<dbReference type="GO" id="GO:0046872">
    <property type="term" value="F:metal ion binding"/>
    <property type="evidence" value="ECO:0007669"/>
    <property type="project" value="UniProtKB-KW"/>
</dbReference>
<dbReference type="GO" id="GO:0016702">
    <property type="term" value="F:oxidoreductase activity, acting on single donors with incorporation of molecular oxygen, incorporation of two atoms of oxygen"/>
    <property type="evidence" value="ECO:0007669"/>
    <property type="project" value="TreeGrafter"/>
</dbReference>
<dbReference type="GO" id="GO:0004601">
    <property type="term" value="F:peroxidase activity"/>
    <property type="evidence" value="ECO:0007669"/>
    <property type="project" value="UniProtKB-KW"/>
</dbReference>
<dbReference type="GO" id="GO:0004666">
    <property type="term" value="F:prostaglandin-endoperoxide synthase activity"/>
    <property type="evidence" value="ECO:0007669"/>
    <property type="project" value="UniProtKB-EC"/>
</dbReference>
<dbReference type="GO" id="GO:0019371">
    <property type="term" value="P:cyclooxygenase pathway"/>
    <property type="evidence" value="ECO:0007669"/>
    <property type="project" value="TreeGrafter"/>
</dbReference>
<dbReference type="GO" id="GO:0006979">
    <property type="term" value="P:response to oxidative stress"/>
    <property type="evidence" value="ECO:0007669"/>
    <property type="project" value="InterPro"/>
</dbReference>
<dbReference type="CDD" id="cd00054">
    <property type="entry name" value="EGF_CA"/>
    <property type="match status" value="1"/>
</dbReference>
<dbReference type="CDD" id="cd09816">
    <property type="entry name" value="prostaglandin_endoperoxide_synthase"/>
    <property type="match status" value="1"/>
</dbReference>
<dbReference type="FunFam" id="1.10.640.10:FF:000002">
    <property type="entry name" value="Prostaglandin G/H synthase 2"/>
    <property type="match status" value="1"/>
</dbReference>
<dbReference type="FunFam" id="2.10.25.10:FF:000235">
    <property type="entry name" value="Prostaglandin G/H synthase 2"/>
    <property type="match status" value="1"/>
</dbReference>
<dbReference type="Gene3D" id="1.10.640.10">
    <property type="entry name" value="Haem peroxidase domain superfamily, animal type"/>
    <property type="match status" value="1"/>
</dbReference>
<dbReference type="Gene3D" id="2.10.25.10">
    <property type="entry name" value="Laminin"/>
    <property type="match status" value="1"/>
</dbReference>
<dbReference type="InterPro" id="IPR000742">
    <property type="entry name" value="EGF-like_dom"/>
</dbReference>
<dbReference type="InterPro" id="IPR019791">
    <property type="entry name" value="Haem_peroxidase_animal"/>
</dbReference>
<dbReference type="InterPro" id="IPR010255">
    <property type="entry name" value="Haem_peroxidase_sf"/>
</dbReference>
<dbReference type="InterPro" id="IPR037120">
    <property type="entry name" value="Haem_peroxidase_sf_animal"/>
</dbReference>
<dbReference type="InterPro" id="IPR050783">
    <property type="entry name" value="Oxylipin_biosynth_metab"/>
</dbReference>
<dbReference type="PANTHER" id="PTHR11903">
    <property type="entry name" value="PROSTAGLANDIN G/H SYNTHASE"/>
    <property type="match status" value="1"/>
</dbReference>
<dbReference type="PANTHER" id="PTHR11903:SF6">
    <property type="entry name" value="PROSTAGLANDIN G_H SYNTHASE 1"/>
    <property type="match status" value="1"/>
</dbReference>
<dbReference type="Pfam" id="PF03098">
    <property type="entry name" value="An_peroxidase"/>
    <property type="match status" value="1"/>
</dbReference>
<dbReference type="PRINTS" id="PR00457">
    <property type="entry name" value="ANPEROXIDASE"/>
</dbReference>
<dbReference type="SUPFAM" id="SSF57196">
    <property type="entry name" value="EGF/Laminin"/>
    <property type="match status" value="1"/>
</dbReference>
<dbReference type="SUPFAM" id="SSF48113">
    <property type="entry name" value="Heme-dependent peroxidases"/>
    <property type="match status" value="1"/>
</dbReference>
<dbReference type="PROSITE" id="PS50026">
    <property type="entry name" value="EGF_3"/>
    <property type="match status" value="1"/>
</dbReference>
<dbReference type="PROSITE" id="PS50292">
    <property type="entry name" value="PEROXIDASE_3"/>
    <property type="match status" value="1"/>
</dbReference>
<sequence>MSRSSPSLRLPVLLLLLLLLLLPPPPPVLPADPGAPAPVNPCCYFPCQHQGVCVRVALDRYQCDCTRTGYSGPNCTVPDLWTWLRSSLRPSPTFVHYLLTHVRWFWEFVNATFIRDTLMRLVLTVRSNLIPSPPTYNLDYDYISWEAFSNVSYYTRVLPSVPKDCPTPMGTKGKKQLPDAQVLAHRFLLRRTFIPDPQGTNLMFAFFAQHFTHQFFKTSGKMGPGFTKALGHGVDLGHIYGDSLERQYHLRLFKDGKLKYQVLDGEVYPPSVEEAPVLMHYPRGVPPRSQMAVGQEVFGLLPGLMLYATLWLREHNRVCDLLKAEHPTWDDEQLFQTTRLILIGETIKIVIEEYVQQLSGYFLQLKFDPEMLFSVQFQYRNRIAMEFNHLYHWHPLMPDSFQVGSQEYSYEQFLFNTSMLVDYGVEALVDAFSRQSAGRIGGGRNIDHHVLHVAVEVIKESREMRLQPFNEYRKRFGLKPYASFQELTGETEMAAELEELYGDIDALEFYPGLLLEKCQPNSIFGESMIEIGAPFSLKGLLGNPICSPEYWKPSTFGGEVGSNLIKTATLKKLVCLNTKTCPYVSFRVPRSSGDDGPAAERRSTEL</sequence>
<organism>
    <name type="scientific">Oryctolagus cuniculus</name>
    <name type="common">Rabbit</name>
    <dbReference type="NCBI Taxonomy" id="9986"/>
    <lineage>
        <taxon>Eukaryota</taxon>
        <taxon>Metazoa</taxon>
        <taxon>Chordata</taxon>
        <taxon>Craniata</taxon>
        <taxon>Vertebrata</taxon>
        <taxon>Euteleostomi</taxon>
        <taxon>Mammalia</taxon>
        <taxon>Eutheria</taxon>
        <taxon>Euarchontoglires</taxon>
        <taxon>Glires</taxon>
        <taxon>Lagomorpha</taxon>
        <taxon>Leporidae</taxon>
        <taxon>Oryctolagus</taxon>
    </lineage>
</organism>
<accession>O97554</accession>
<evidence type="ECO:0000250" key="1"/>
<evidence type="ECO:0000250" key="2">
    <source>
        <dbReference type="UniProtKB" id="P05979"/>
    </source>
</evidence>
<evidence type="ECO:0000250" key="3">
    <source>
        <dbReference type="UniProtKB" id="P23219"/>
    </source>
</evidence>
<evidence type="ECO:0000255" key="4"/>
<evidence type="ECO:0000255" key="5">
    <source>
        <dbReference type="PROSITE-ProRule" id="PRU00076"/>
    </source>
</evidence>
<evidence type="ECO:0000255" key="6">
    <source>
        <dbReference type="PROSITE-ProRule" id="PRU00298"/>
    </source>
</evidence>
<evidence type="ECO:0000305" key="7"/>
<protein>
    <recommendedName>
        <fullName>Prostaglandin G/H synthase 1</fullName>
        <ecNumber evidence="3">1.14.99.1</ecNumber>
    </recommendedName>
    <alternativeName>
        <fullName>Cyclooxygenase-1</fullName>
        <shortName>COX-1</shortName>
    </alternativeName>
    <alternativeName>
        <fullName>Prostaglandin H2 synthase 1</fullName>
        <shortName>PGH synthase 1</shortName>
        <shortName>PGHS-1</shortName>
        <shortName>PHS 1</shortName>
    </alternativeName>
    <alternativeName>
        <fullName>Prostaglandin-endoperoxide synthase 1</fullName>
    </alternativeName>
</protein>
<comment type="function">
    <text evidence="2">Dual cyclooxygenase and peroxidase that plays an important role in the biosynthesis pathway of prostanoids, a class of C20 oxylipins mainly derived from arachidonate ((5Z,8Z,11Z,14Z)-eicosatetraenoate, AA, C20:4(n-6)), with a particular role in the inflammatory response. The cyclooxygenase activity oxygenates AA to the hydroperoxy endoperoxide prostaglandin G2 (PGG2), and the peroxidase activity reduces PGG2 to the hydroxy endoperoxide prostaglandin H2 (PGH2), the precursor of all 2-series prostaglandins and thromboxanes. This complex transformation is initiated by abstraction of hydrogen at carbon 13 (with S-stereochemistry), followed by insertion of molecular O2 to form the endoperoxide bridge between carbon 9 and 11 that defines prostaglandins. The insertion of a second molecule of O2 (bis-oxygenase activity) yields a hydroperoxy group in PGG2 that is then reduced to PGH2 by two electrons. Involved in the constitutive production of prostanoids in particular in the stomach and platelets. In gastric epithelial cells, it is a key step in the generation of prostaglandins, such as prostaglandin E2 (PGE2), which plays an important role in cytoprotection. In platelets, it is involved in the generation of thromboxane A2 (TXA2), which promotes platelet activation and aggregation, vasoconstriction and proliferation of vascular smooth muscle cells. Can also use linoleate (LA, (9Z,12Z)-octadecadienoate, C18:2(n-6)) as substrate and produce hydroxyoctadecadienoates (HODEs) in a regio- and stereospecific manner, being (9R)-HODE ((9R)-hydroxy-(10E,12Z)-octadecadienoate) and (13S)-HODE ((13S)-hydroxy-(9Z,11E)-octadecadienoate) its major products.</text>
</comment>
<comment type="catalytic activity">
    <reaction evidence="3">
        <text>(5Z,8Z,11Z,14Z)-eicosatetraenoate + AH2 + 2 O2 = prostaglandin H2 + A + H2O</text>
        <dbReference type="Rhea" id="RHEA:23728"/>
        <dbReference type="ChEBI" id="CHEBI:13193"/>
        <dbReference type="ChEBI" id="CHEBI:15377"/>
        <dbReference type="ChEBI" id="CHEBI:15379"/>
        <dbReference type="ChEBI" id="CHEBI:17499"/>
        <dbReference type="ChEBI" id="CHEBI:32395"/>
        <dbReference type="ChEBI" id="CHEBI:57405"/>
        <dbReference type="EC" id="1.14.99.1"/>
    </reaction>
    <physiologicalReaction direction="left-to-right" evidence="3">
        <dbReference type="Rhea" id="RHEA:23729"/>
    </physiologicalReaction>
</comment>
<comment type="catalytic activity">
    <reaction evidence="3">
        <text>(5Z,8Z,11Z,14Z)-eicosatetraenoate + 2 O2 = prostaglandin G2</text>
        <dbReference type="Rhea" id="RHEA:42596"/>
        <dbReference type="ChEBI" id="CHEBI:15379"/>
        <dbReference type="ChEBI" id="CHEBI:32395"/>
        <dbReference type="ChEBI" id="CHEBI:82629"/>
    </reaction>
    <physiologicalReaction direction="left-to-right" evidence="3">
        <dbReference type="Rhea" id="RHEA:42597"/>
    </physiologicalReaction>
</comment>
<comment type="catalytic activity">
    <reaction evidence="3">
        <text>prostaglandin G2 + AH2 = prostaglandin H2 + A + H2O</text>
        <dbReference type="Rhea" id="RHEA:42600"/>
        <dbReference type="ChEBI" id="CHEBI:13193"/>
        <dbReference type="ChEBI" id="CHEBI:15377"/>
        <dbReference type="ChEBI" id="CHEBI:17499"/>
        <dbReference type="ChEBI" id="CHEBI:57405"/>
        <dbReference type="ChEBI" id="CHEBI:82629"/>
    </reaction>
    <physiologicalReaction direction="left-to-right" evidence="3">
        <dbReference type="Rhea" id="RHEA:42601"/>
    </physiologicalReaction>
</comment>
<comment type="catalytic activity">
    <reaction evidence="2">
        <text>(9Z,12Z)-octadecadienoate + AH2 + O2 = (9R)-hydroxy-(10E,12Z)-octadecadienoate + A + H2O</text>
        <dbReference type="Rhea" id="RHEA:75447"/>
        <dbReference type="ChEBI" id="CHEBI:13193"/>
        <dbReference type="ChEBI" id="CHEBI:15377"/>
        <dbReference type="ChEBI" id="CHEBI:15379"/>
        <dbReference type="ChEBI" id="CHEBI:17499"/>
        <dbReference type="ChEBI" id="CHEBI:30245"/>
        <dbReference type="ChEBI" id="CHEBI:77895"/>
    </reaction>
    <physiologicalReaction direction="left-to-right" evidence="2">
        <dbReference type="Rhea" id="RHEA:75448"/>
    </physiologicalReaction>
</comment>
<comment type="catalytic activity">
    <reaction evidence="2">
        <text>(9Z,12Z)-octadecadienoate + AH2 + O2 = (9S)-hydroxy-(10E,12Z)-octadecadienoate + A + H2O</text>
        <dbReference type="Rhea" id="RHEA:75459"/>
        <dbReference type="ChEBI" id="CHEBI:13193"/>
        <dbReference type="ChEBI" id="CHEBI:15377"/>
        <dbReference type="ChEBI" id="CHEBI:15379"/>
        <dbReference type="ChEBI" id="CHEBI:17499"/>
        <dbReference type="ChEBI" id="CHEBI:30245"/>
        <dbReference type="ChEBI" id="CHEBI:77852"/>
    </reaction>
    <physiologicalReaction direction="left-to-right" evidence="2">
        <dbReference type="Rhea" id="RHEA:75460"/>
    </physiologicalReaction>
</comment>
<comment type="catalytic activity">
    <reaction evidence="2">
        <text>(9Z,12Z)-octadecadienoate + AH2 + O2 = (13S)-hydroxy-(9Z,11E)-octadecadienoate + A + H2O</text>
        <dbReference type="Rhea" id="RHEA:75451"/>
        <dbReference type="ChEBI" id="CHEBI:13193"/>
        <dbReference type="ChEBI" id="CHEBI:15377"/>
        <dbReference type="ChEBI" id="CHEBI:15379"/>
        <dbReference type="ChEBI" id="CHEBI:17499"/>
        <dbReference type="ChEBI" id="CHEBI:30245"/>
        <dbReference type="ChEBI" id="CHEBI:90850"/>
    </reaction>
    <physiologicalReaction direction="left-to-right" evidence="2">
        <dbReference type="Rhea" id="RHEA:75452"/>
    </physiologicalReaction>
</comment>
<comment type="catalytic activity">
    <reaction evidence="2">
        <text>(9Z,12Z)-octadecadienoate + AH2 + O2 = (13R)-hydroxy-(9Z,11E)-octadecadienoate + A + H2O</text>
        <dbReference type="Rhea" id="RHEA:75455"/>
        <dbReference type="ChEBI" id="CHEBI:13193"/>
        <dbReference type="ChEBI" id="CHEBI:15377"/>
        <dbReference type="ChEBI" id="CHEBI:15379"/>
        <dbReference type="ChEBI" id="CHEBI:17499"/>
        <dbReference type="ChEBI" id="CHEBI:30245"/>
        <dbReference type="ChEBI" id="CHEBI:136655"/>
    </reaction>
    <physiologicalReaction direction="left-to-right" evidence="2">
        <dbReference type="Rhea" id="RHEA:75456"/>
    </physiologicalReaction>
</comment>
<comment type="cofactor">
    <cofactor evidence="1">
        <name>heme b</name>
        <dbReference type="ChEBI" id="CHEBI:60344"/>
    </cofactor>
    <text evidence="1">Binds 1 heme b (iron(II)-protoporphyrin IX) group per subunit.</text>
</comment>
<comment type="activity regulation">
    <text evidence="3">The cyclooxygenase activity is inhibited by nonsteroidal anti-inflammatory drugs (NSAIDs) including ibuprofen, flurbiprofen, ketoprofen, naproxen, flurbiprofen, anirolac, fenclofenac and diclofenac.</text>
</comment>
<comment type="pathway">
    <text evidence="3">Lipid metabolism; prostaglandin biosynthesis.</text>
</comment>
<comment type="subunit">
    <text evidence="1">Homodimer.</text>
</comment>
<comment type="subcellular location">
    <subcellularLocation>
        <location evidence="1">Microsome membrane</location>
        <topology evidence="1">Peripheral membrane protein</topology>
    </subcellularLocation>
    <subcellularLocation>
        <location evidence="1">Endoplasmic reticulum membrane</location>
        <topology evidence="1">Peripheral membrane protein</topology>
    </subcellularLocation>
</comment>
<comment type="miscellaneous">
    <text>The conversion of arachidonate to prostaglandin H2 is a 2 step reaction: a cyclooxygenase (COX) reaction which converts arachidonate to prostaglandin G2 (PGG2) and a peroxidase reaction in which PGG2 is reduced to prostaglandin H2 (PGH2). The cyclooxygenase reaction occurs in a hydrophobic channel in the core of the enzyme. The peroxidase reaction occurs at a heme-containing active site located near the protein surface. The nonsteroidal anti-inflammatory drugs (NSAIDs) binding site corresponds to the cyclooxygenase active site.</text>
</comment>
<comment type="miscellaneous">
    <text>Conversion of arachidonate to prostaglandin H2 is mediated by 2 different isozymes: the constitutive PTGS1 and the inducible PTGS2. PTGS1 is expressed constitutively and generally produces prostanoids acutely in response to hormonal stimuli to fine-tune physiological processes requiring instantaneous, continuous regulation (e.g. hemostasis). PTGS2 is inducible and typically produces prostanoids that mediate responses to physiological stresses such as infection and inflammation.</text>
</comment>
<comment type="miscellaneous">
    <text>PTGS1 and PTGS2 are the targets of nonsteroidal anti-inflammatory drugs (NSAIDs) including aspirin and ibuprofen. Aspirin is able to produce an irreversible inactivation of the enzyme through a serine acetylation. Inhibition of the PGHSs with NSAIDs acutely reduces inflammation, pain, and fever, and long-term use of these drugs reduces fatal thrombotic events, as well as the development of colon cancer and Alzheimer's disease. PTGS2 is the principal isozyme responsible for production of inflammatory prostaglandins. New generation PTGSs inhibitors strive to be selective for PTGS2, to avoid side effects such as gastrointestinal complications and ulceration.</text>
</comment>
<comment type="similarity">
    <text evidence="7">Belongs to the prostaglandin G/H synthase family.</text>
</comment>
<feature type="signal peptide" evidence="4">
    <location>
        <begin position="1"/>
        <end position="30"/>
    </location>
</feature>
<feature type="chain" id="PRO_0000041818" description="Prostaglandin G/H synthase 1">
    <location>
        <begin position="31"/>
        <end position="606"/>
    </location>
</feature>
<feature type="domain" description="EGF-like" evidence="5">
    <location>
        <begin position="38"/>
        <end position="76"/>
    </location>
</feature>
<feature type="active site" description="Proton acceptor" evidence="6">
    <location>
        <position position="213"/>
    </location>
</feature>
<feature type="active site" description="For cyclooxygenase activity" evidence="1">
    <location>
        <position position="391"/>
    </location>
</feature>
<feature type="binding site" description="axial binding residue" evidence="6">
    <location>
        <position position="394"/>
    </location>
    <ligand>
        <name>heme b</name>
        <dbReference type="ChEBI" id="CHEBI:60344"/>
    </ligand>
    <ligandPart>
        <name>Fe</name>
        <dbReference type="ChEBI" id="CHEBI:18248"/>
    </ligandPart>
</feature>
<feature type="site" description="Aspirin-acetylated serine" evidence="1">
    <location>
        <position position="536"/>
    </location>
</feature>
<feature type="glycosylation site" description="N-linked (GlcNAc...) asparagine" evidence="4">
    <location>
        <position position="74"/>
    </location>
</feature>
<feature type="glycosylation site" description="N-linked (GlcNAc...) asparagine" evidence="4">
    <location>
        <position position="110"/>
    </location>
</feature>
<feature type="glycosylation site" description="N-linked (GlcNAc...) asparagine" evidence="4">
    <location>
        <position position="150"/>
    </location>
</feature>
<feature type="glycosylation site" description="N-linked (GlcNAc...) asparagine" evidence="4">
    <location>
        <position position="416"/>
    </location>
</feature>
<feature type="disulfide bond" evidence="1">
    <location>
        <begin position="42"/>
        <end position="53"/>
    </location>
</feature>
<feature type="disulfide bond" evidence="1">
    <location>
        <begin position="43"/>
        <end position="165"/>
    </location>
</feature>
<feature type="disulfide bond" evidence="1">
    <location>
        <begin position="47"/>
        <end position="63"/>
    </location>
</feature>
<feature type="disulfide bond" evidence="1">
    <location>
        <begin position="65"/>
        <end position="75"/>
    </location>
</feature>
<feature type="disulfide bond" evidence="1">
    <location>
        <begin position="575"/>
        <end position="581"/>
    </location>
</feature>
<gene>
    <name type="primary">PTGS1</name>
    <name type="synonym">COX1</name>
</gene>
<proteinExistence type="evidence at transcript level"/>
<reference key="1">
    <citation type="submission" date="1997-09" db="EMBL/GenBank/DDBJ databases">
        <title>Intrarenal localization of cyclooxygenase-1 and -2 and their differential expression in acute hydronephrotic kidney.</title>
        <authorList>
            <person name="Guan Y."/>
            <person name="Zhang Y."/>
            <person name="Breyer R.M."/>
            <person name="Davis L."/>
            <person name="Redha R."/>
            <person name="Chang S."/>
            <person name="Breyer M.D."/>
        </authorList>
    </citation>
    <scope>NUCLEOTIDE SEQUENCE [MRNA]</scope>
    <source>
        <strain>New Zealand white</strain>
    </source>
</reference>
<keyword id="KW-0223">Dioxygenase</keyword>
<keyword id="KW-1015">Disulfide bond</keyword>
<keyword id="KW-0245">EGF-like domain</keyword>
<keyword id="KW-0256">Endoplasmic reticulum</keyword>
<keyword id="KW-0275">Fatty acid biosynthesis</keyword>
<keyword id="KW-0276">Fatty acid metabolism</keyword>
<keyword id="KW-0325">Glycoprotein</keyword>
<keyword id="KW-0349">Heme</keyword>
<keyword id="KW-0408">Iron</keyword>
<keyword id="KW-0444">Lipid biosynthesis</keyword>
<keyword id="KW-0443">Lipid metabolism</keyword>
<keyword id="KW-0472">Membrane</keyword>
<keyword id="KW-0479">Metal-binding</keyword>
<keyword id="KW-0492">Microsome</keyword>
<keyword id="KW-0560">Oxidoreductase</keyword>
<keyword id="KW-0575">Peroxidase</keyword>
<keyword id="KW-0643">Prostaglandin biosynthesis</keyword>
<keyword id="KW-0644">Prostaglandin metabolism</keyword>
<keyword id="KW-1185">Reference proteome</keyword>
<keyword id="KW-0732">Signal</keyword>
<name>PGH1_RABIT</name>